<keyword id="KW-0963">Cytoplasm</keyword>
<keyword id="KW-0489">Methyltransferase</keyword>
<keyword id="KW-0949">S-adenosyl-L-methionine</keyword>
<keyword id="KW-0808">Transferase</keyword>
<keyword id="KW-0819">tRNA processing</keyword>
<organism>
    <name type="scientific">Streptococcus suis (strain 05ZYH33)</name>
    <dbReference type="NCBI Taxonomy" id="391295"/>
    <lineage>
        <taxon>Bacteria</taxon>
        <taxon>Bacillati</taxon>
        <taxon>Bacillota</taxon>
        <taxon>Bacilli</taxon>
        <taxon>Lactobacillales</taxon>
        <taxon>Streptococcaceae</taxon>
        <taxon>Streptococcus</taxon>
    </lineage>
</organism>
<evidence type="ECO:0000255" key="1">
    <source>
        <dbReference type="HAMAP-Rule" id="MF_00605"/>
    </source>
</evidence>
<feature type="chain" id="PRO_1000006530" description="tRNA (guanine-N(1)-)-methyltransferase">
    <location>
        <begin position="1"/>
        <end position="241"/>
    </location>
</feature>
<feature type="binding site" evidence="1">
    <location>
        <position position="108"/>
    </location>
    <ligand>
        <name>S-adenosyl-L-methionine</name>
        <dbReference type="ChEBI" id="CHEBI:59789"/>
    </ligand>
</feature>
<feature type="binding site" evidence="1">
    <location>
        <begin position="127"/>
        <end position="132"/>
    </location>
    <ligand>
        <name>S-adenosyl-L-methionine</name>
        <dbReference type="ChEBI" id="CHEBI:59789"/>
    </ligand>
</feature>
<proteinExistence type="inferred from homology"/>
<sequence>MRIDILTLFPEMFAPLEHSIVGKARDKGLLEINYHNFRENAEKARHVDDEPYGGGQGMLLLAQPIFDTMDSIEQTKPRVILLDPAGRTFNQAYAEELAQEEQLIFICGHYEGYDERIKTLVTDEISLGDYVLTGGELAAMTMIDATVRLIPEVIGKEVSHTDDSFSSGLLEYPQYTRPYEYRGMVVPDVLMSGHHENIRKWRLEESLRKTYQRRPDLLENYNFTAEELTIFEKIKAEDTVD</sequence>
<dbReference type="EC" id="2.1.1.228" evidence="1"/>
<dbReference type="EMBL" id="CP000407">
    <property type="protein sequence ID" value="ABP89786.1"/>
    <property type="molecule type" value="Genomic_DNA"/>
</dbReference>
<dbReference type="SMR" id="A4VUJ7"/>
<dbReference type="STRING" id="391295.SSU05_0820"/>
<dbReference type="KEGG" id="ssu:SSU05_0820"/>
<dbReference type="eggNOG" id="COG0336">
    <property type="taxonomic scope" value="Bacteria"/>
</dbReference>
<dbReference type="HOGENOM" id="CLU_047363_0_1_9"/>
<dbReference type="GO" id="GO:0005829">
    <property type="term" value="C:cytosol"/>
    <property type="evidence" value="ECO:0007669"/>
    <property type="project" value="TreeGrafter"/>
</dbReference>
<dbReference type="GO" id="GO:0052906">
    <property type="term" value="F:tRNA (guanine(37)-N1)-methyltransferase activity"/>
    <property type="evidence" value="ECO:0007669"/>
    <property type="project" value="UniProtKB-UniRule"/>
</dbReference>
<dbReference type="GO" id="GO:0002939">
    <property type="term" value="P:tRNA N1-guanine methylation"/>
    <property type="evidence" value="ECO:0007669"/>
    <property type="project" value="TreeGrafter"/>
</dbReference>
<dbReference type="CDD" id="cd18080">
    <property type="entry name" value="TrmD-like"/>
    <property type="match status" value="1"/>
</dbReference>
<dbReference type="FunFam" id="1.10.1270.20:FF:000001">
    <property type="entry name" value="tRNA (guanine-N(1)-)-methyltransferase"/>
    <property type="match status" value="1"/>
</dbReference>
<dbReference type="FunFam" id="3.40.1280.10:FF:000001">
    <property type="entry name" value="tRNA (guanine-N(1)-)-methyltransferase"/>
    <property type="match status" value="1"/>
</dbReference>
<dbReference type="Gene3D" id="3.40.1280.10">
    <property type="match status" value="1"/>
</dbReference>
<dbReference type="Gene3D" id="1.10.1270.20">
    <property type="entry name" value="tRNA(m1g37)methyltransferase, domain 2"/>
    <property type="match status" value="1"/>
</dbReference>
<dbReference type="HAMAP" id="MF_00605">
    <property type="entry name" value="TrmD"/>
    <property type="match status" value="1"/>
</dbReference>
<dbReference type="InterPro" id="IPR029028">
    <property type="entry name" value="Alpha/beta_knot_MTases"/>
</dbReference>
<dbReference type="InterPro" id="IPR023148">
    <property type="entry name" value="tRNA_m1G_MeTrfase_C_sf"/>
</dbReference>
<dbReference type="InterPro" id="IPR002649">
    <property type="entry name" value="tRNA_m1G_MeTrfase_TrmD"/>
</dbReference>
<dbReference type="InterPro" id="IPR029026">
    <property type="entry name" value="tRNA_m1G_MTases_N"/>
</dbReference>
<dbReference type="InterPro" id="IPR016009">
    <property type="entry name" value="tRNA_MeTrfase_TRMD/TRM10"/>
</dbReference>
<dbReference type="NCBIfam" id="NF000648">
    <property type="entry name" value="PRK00026.1"/>
    <property type="match status" value="1"/>
</dbReference>
<dbReference type="NCBIfam" id="TIGR00088">
    <property type="entry name" value="trmD"/>
    <property type="match status" value="1"/>
</dbReference>
<dbReference type="PANTHER" id="PTHR46417">
    <property type="entry name" value="TRNA (GUANINE-N(1)-)-METHYLTRANSFERASE"/>
    <property type="match status" value="1"/>
</dbReference>
<dbReference type="PANTHER" id="PTHR46417:SF1">
    <property type="entry name" value="TRNA (GUANINE-N(1)-)-METHYLTRANSFERASE"/>
    <property type="match status" value="1"/>
</dbReference>
<dbReference type="Pfam" id="PF01746">
    <property type="entry name" value="tRNA_m1G_MT"/>
    <property type="match status" value="1"/>
</dbReference>
<dbReference type="PIRSF" id="PIRSF000386">
    <property type="entry name" value="tRNA_mtase"/>
    <property type="match status" value="1"/>
</dbReference>
<dbReference type="SUPFAM" id="SSF75217">
    <property type="entry name" value="alpha/beta knot"/>
    <property type="match status" value="1"/>
</dbReference>
<reference key="1">
    <citation type="journal article" date="2007" name="PLoS ONE">
        <title>A glimpse of streptococcal toxic shock syndrome from comparative genomics of S. suis 2 Chinese isolates.</title>
        <authorList>
            <person name="Chen C."/>
            <person name="Tang J."/>
            <person name="Dong W."/>
            <person name="Wang C."/>
            <person name="Feng Y."/>
            <person name="Wang J."/>
            <person name="Zheng F."/>
            <person name="Pan X."/>
            <person name="Liu D."/>
            <person name="Li M."/>
            <person name="Song Y."/>
            <person name="Zhu X."/>
            <person name="Sun H."/>
            <person name="Feng T."/>
            <person name="Guo Z."/>
            <person name="Ju A."/>
            <person name="Ge J."/>
            <person name="Dong Y."/>
            <person name="Sun W."/>
            <person name="Jiang Y."/>
            <person name="Wang J."/>
            <person name="Yan J."/>
            <person name="Yang H."/>
            <person name="Wang X."/>
            <person name="Gao G.F."/>
            <person name="Yang R."/>
            <person name="Wang J."/>
            <person name="Yu J."/>
        </authorList>
    </citation>
    <scope>NUCLEOTIDE SEQUENCE [LARGE SCALE GENOMIC DNA]</scope>
    <source>
        <strain>05ZYH33</strain>
    </source>
</reference>
<name>TRMD_STRSY</name>
<gene>
    <name evidence="1" type="primary">trmD</name>
    <name type="ordered locus">SSU05_0820</name>
</gene>
<comment type="function">
    <text evidence="1">Specifically methylates guanosine-37 in various tRNAs.</text>
</comment>
<comment type="catalytic activity">
    <reaction evidence="1">
        <text>guanosine(37) in tRNA + S-adenosyl-L-methionine = N(1)-methylguanosine(37) in tRNA + S-adenosyl-L-homocysteine + H(+)</text>
        <dbReference type="Rhea" id="RHEA:36899"/>
        <dbReference type="Rhea" id="RHEA-COMP:10145"/>
        <dbReference type="Rhea" id="RHEA-COMP:10147"/>
        <dbReference type="ChEBI" id="CHEBI:15378"/>
        <dbReference type="ChEBI" id="CHEBI:57856"/>
        <dbReference type="ChEBI" id="CHEBI:59789"/>
        <dbReference type="ChEBI" id="CHEBI:73542"/>
        <dbReference type="ChEBI" id="CHEBI:74269"/>
        <dbReference type="EC" id="2.1.1.228"/>
    </reaction>
</comment>
<comment type="subunit">
    <text evidence="1">Homodimer.</text>
</comment>
<comment type="subcellular location">
    <subcellularLocation>
        <location evidence="1">Cytoplasm</location>
    </subcellularLocation>
</comment>
<comment type="similarity">
    <text evidence="1">Belongs to the RNA methyltransferase TrmD family.</text>
</comment>
<protein>
    <recommendedName>
        <fullName evidence="1">tRNA (guanine-N(1)-)-methyltransferase</fullName>
        <ecNumber evidence="1">2.1.1.228</ecNumber>
    </recommendedName>
    <alternativeName>
        <fullName evidence="1">M1G-methyltransferase</fullName>
    </alternativeName>
    <alternativeName>
        <fullName evidence="1">tRNA [GM37] methyltransferase</fullName>
    </alternativeName>
</protein>
<accession>A4VUJ7</accession>